<keyword id="KW-0067">ATP-binding</keyword>
<keyword id="KW-0963">Cytoplasm</keyword>
<keyword id="KW-0347">Helicase</keyword>
<keyword id="KW-0378">Hydrolase</keyword>
<keyword id="KW-0547">Nucleotide-binding</keyword>
<keyword id="KW-0694">RNA-binding</keyword>
<accession>Q1R4F9</accession>
<organism>
    <name type="scientific">Escherichia coli (strain UTI89 / UPEC)</name>
    <dbReference type="NCBI Taxonomy" id="364106"/>
    <lineage>
        <taxon>Bacteria</taxon>
        <taxon>Pseudomonadati</taxon>
        <taxon>Pseudomonadota</taxon>
        <taxon>Gammaproteobacteria</taxon>
        <taxon>Enterobacterales</taxon>
        <taxon>Enterobacteriaceae</taxon>
        <taxon>Escherichia</taxon>
    </lineage>
</organism>
<gene>
    <name evidence="1" type="primary">rhlB</name>
    <name type="ordered locus">UTI89_C4334</name>
</gene>
<reference key="1">
    <citation type="journal article" date="2006" name="Proc. Natl. Acad. Sci. U.S.A.">
        <title>Identification of genes subject to positive selection in uropathogenic strains of Escherichia coli: a comparative genomics approach.</title>
        <authorList>
            <person name="Chen S.L."/>
            <person name="Hung C.-S."/>
            <person name="Xu J."/>
            <person name="Reigstad C.S."/>
            <person name="Magrini V."/>
            <person name="Sabo A."/>
            <person name="Blasiar D."/>
            <person name="Bieri T."/>
            <person name="Meyer R.R."/>
            <person name="Ozersky P."/>
            <person name="Armstrong J.R."/>
            <person name="Fulton R.S."/>
            <person name="Latreille J.P."/>
            <person name="Spieth J."/>
            <person name="Hooton T.M."/>
            <person name="Mardis E.R."/>
            <person name="Hultgren S.J."/>
            <person name="Gordon J.I."/>
        </authorList>
    </citation>
    <scope>NUCLEOTIDE SEQUENCE [LARGE SCALE GENOMIC DNA]</scope>
    <source>
        <strain>UTI89 / UPEC</strain>
    </source>
</reference>
<evidence type="ECO:0000255" key="1">
    <source>
        <dbReference type="HAMAP-Rule" id="MF_00661"/>
    </source>
</evidence>
<evidence type="ECO:0000256" key="2">
    <source>
        <dbReference type="SAM" id="MobiDB-lite"/>
    </source>
</evidence>
<feature type="chain" id="PRO_1000082842" description="ATP-dependent RNA helicase RhlB">
    <location>
        <begin position="1"/>
        <end position="421"/>
    </location>
</feature>
<feature type="domain" description="Helicase ATP-binding" evidence="1">
    <location>
        <begin position="40"/>
        <end position="219"/>
    </location>
</feature>
<feature type="domain" description="Helicase C-terminal" evidence="1">
    <location>
        <begin position="245"/>
        <end position="390"/>
    </location>
</feature>
<feature type="region of interest" description="Disordered" evidence="2">
    <location>
        <begin position="392"/>
        <end position="421"/>
    </location>
</feature>
<feature type="short sequence motif" description="Q motif">
    <location>
        <begin position="9"/>
        <end position="37"/>
    </location>
</feature>
<feature type="short sequence motif" description="DEAD box">
    <location>
        <begin position="165"/>
        <end position="168"/>
    </location>
</feature>
<feature type="compositionally biased region" description="Low complexity" evidence="2">
    <location>
        <begin position="402"/>
        <end position="414"/>
    </location>
</feature>
<feature type="binding site" evidence="1">
    <location>
        <begin position="53"/>
        <end position="60"/>
    </location>
    <ligand>
        <name>ATP</name>
        <dbReference type="ChEBI" id="CHEBI:30616"/>
    </ligand>
</feature>
<protein>
    <recommendedName>
        <fullName evidence="1">ATP-dependent RNA helicase RhlB</fullName>
        <ecNumber evidence="1">3.6.4.13</ecNumber>
    </recommendedName>
</protein>
<sequence length="421" mass="47126">MSKTHLTEQKFSDFALHPKVVEALEKKGFHNCTPIQALALPLTLAGRDVAGQAQTGTGKTMAFLTSTFHYLLSHPAIADRKVNQPRALIMAPTRELAVQIHADAEPLAEATGLKLGLAYGGDGYDKQLKVLESGVDILIGTTGRLIDYAKQNHINLGAIQVVVLDEADRMYDLGFIKDIRWLFRRMPPANQRLNMLFSATLSYRVRELAFEQMNNAEYIEVEPEQKTGHRIKEELFYPSNEEKMRLLQTLIEEEWPDRAIIFANTKHRCEEIWGHLAADGHRVGLLTGDVAQKKRLRILDEFTRGDLDILVATDVAARGLHIPAVTHVFNYDLPDDCEDYVHRIGRTGRAGASGHSISLACEEYALNLPAIETYIGHSIPVSKYNPDALMTDLPKPLRLTRPRTGNGPRRTGAPRNRRRSG</sequence>
<dbReference type="EC" id="3.6.4.13" evidence="1"/>
<dbReference type="EMBL" id="CP000243">
    <property type="protein sequence ID" value="ABE09755.1"/>
    <property type="molecule type" value="Genomic_DNA"/>
</dbReference>
<dbReference type="RefSeq" id="WP_000047499.1">
    <property type="nucleotide sequence ID" value="NZ_CP064825.1"/>
</dbReference>
<dbReference type="SMR" id="Q1R4F9"/>
<dbReference type="GeneID" id="93778164"/>
<dbReference type="KEGG" id="eci:UTI89_C4334"/>
<dbReference type="HOGENOM" id="CLU_003041_1_3_6"/>
<dbReference type="Proteomes" id="UP000001952">
    <property type="component" value="Chromosome"/>
</dbReference>
<dbReference type="GO" id="GO:0005829">
    <property type="term" value="C:cytosol"/>
    <property type="evidence" value="ECO:0007669"/>
    <property type="project" value="TreeGrafter"/>
</dbReference>
<dbReference type="GO" id="GO:0005524">
    <property type="term" value="F:ATP binding"/>
    <property type="evidence" value="ECO:0007669"/>
    <property type="project" value="UniProtKB-UniRule"/>
</dbReference>
<dbReference type="GO" id="GO:0016887">
    <property type="term" value="F:ATP hydrolysis activity"/>
    <property type="evidence" value="ECO:0007669"/>
    <property type="project" value="RHEA"/>
</dbReference>
<dbReference type="GO" id="GO:0003723">
    <property type="term" value="F:RNA binding"/>
    <property type="evidence" value="ECO:0007669"/>
    <property type="project" value="UniProtKB-UniRule"/>
</dbReference>
<dbReference type="GO" id="GO:0003724">
    <property type="term" value="F:RNA helicase activity"/>
    <property type="evidence" value="ECO:0007669"/>
    <property type="project" value="UniProtKB-UniRule"/>
</dbReference>
<dbReference type="GO" id="GO:0006401">
    <property type="term" value="P:RNA catabolic process"/>
    <property type="evidence" value="ECO:0007669"/>
    <property type="project" value="UniProtKB-UniRule"/>
</dbReference>
<dbReference type="CDD" id="cd00268">
    <property type="entry name" value="DEADc"/>
    <property type="match status" value="1"/>
</dbReference>
<dbReference type="CDD" id="cd18787">
    <property type="entry name" value="SF2_C_DEAD"/>
    <property type="match status" value="1"/>
</dbReference>
<dbReference type="FunFam" id="3.40.50.300:FF:000008">
    <property type="entry name" value="ATP-dependent RNA helicase RhlB"/>
    <property type="match status" value="1"/>
</dbReference>
<dbReference type="FunFam" id="3.40.50.300:FF:000312">
    <property type="entry name" value="ATP-dependent RNA helicase RhlB"/>
    <property type="match status" value="1"/>
</dbReference>
<dbReference type="Gene3D" id="3.40.50.300">
    <property type="entry name" value="P-loop containing nucleotide triphosphate hydrolases"/>
    <property type="match status" value="2"/>
</dbReference>
<dbReference type="HAMAP" id="MF_00661">
    <property type="entry name" value="DEAD_helicase_RhlB"/>
    <property type="match status" value="1"/>
</dbReference>
<dbReference type="InterPro" id="IPR011545">
    <property type="entry name" value="DEAD/DEAH_box_helicase_dom"/>
</dbReference>
<dbReference type="InterPro" id="IPR050079">
    <property type="entry name" value="DEAD_box_RNA_helicase"/>
</dbReference>
<dbReference type="InterPro" id="IPR014001">
    <property type="entry name" value="Helicase_ATP-bd"/>
</dbReference>
<dbReference type="InterPro" id="IPR001650">
    <property type="entry name" value="Helicase_C-like"/>
</dbReference>
<dbReference type="InterPro" id="IPR027417">
    <property type="entry name" value="P-loop_NTPase"/>
</dbReference>
<dbReference type="InterPro" id="IPR000629">
    <property type="entry name" value="RNA-helicase_DEAD-box_CS"/>
</dbReference>
<dbReference type="InterPro" id="IPR023554">
    <property type="entry name" value="RNA_helicase_ATP-dep_RhlB"/>
</dbReference>
<dbReference type="InterPro" id="IPR014014">
    <property type="entry name" value="RNA_helicase_DEAD_Q_motif"/>
</dbReference>
<dbReference type="NCBIfam" id="NF003419">
    <property type="entry name" value="PRK04837.1"/>
    <property type="match status" value="1"/>
</dbReference>
<dbReference type="PANTHER" id="PTHR47959:SF10">
    <property type="entry name" value="ATP-DEPENDENT RNA HELICASE RHLB"/>
    <property type="match status" value="1"/>
</dbReference>
<dbReference type="PANTHER" id="PTHR47959">
    <property type="entry name" value="ATP-DEPENDENT RNA HELICASE RHLE-RELATED"/>
    <property type="match status" value="1"/>
</dbReference>
<dbReference type="Pfam" id="PF00270">
    <property type="entry name" value="DEAD"/>
    <property type="match status" value="1"/>
</dbReference>
<dbReference type="Pfam" id="PF00271">
    <property type="entry name" value="Helicase_C"/>
    <property type="match status" value="1"/>
</dbReference>
<dbReference type="SMART" id="SM00487">
    <property type="entry name" value="DEXDc"/>
    <property type="match status" value="1"/>
</dbReference>
<dbReference type="SMART" id="SM00490">
    <property type="entry name" value="HELICc"/>
    <property type="match status" value="1"/>
</dbReference>
<dbReference type="SUPFAM" id="SSF52540">
    <property type="entry name" value="P-loop containing nucleoside triphosphate hydrolases"/>
    <property type="match status" value="1"/>
</dbReference>
<dbReference type="PROSITE" id="PS00039">
    <property type="entry name" value="DEAD_ATP_HELICASE"/>
    <property type="match status" value="1"/>
</dbReference>
<dbReference type="PROSITE" id="PS51192">
    <property type="entry name" value="HELICASE_ATP_BIND_1"/>
    <property type="match status" value="1"/>
</dbReference>
<dbReference type="PROSITE" id="PS51194">
    <property type="entry name" value="HELICASE_CTER"/>
    <property type="match status" value="1"/>
</dbReference>
<dbReference type="PROSITE" id="PS51195">
    <property type="entry name" value="Q_MOTIF"/>
    <property type="match status" value="1"/>
</dbReference>
<comment type="function">
    <text evidence="1">DEAD-box RNA helicase involved in RNA degradation. Has RNA-dependent ATPase activity and unwinds double-stranded RNA.</text>
</comment>
<comment type="catalytic activity">
    <reaction evidence="1">
        <text>ATP + H2O = ADP + phosphate + H(+)</text>
        <dbReference type="Rhea" id="RHEA:13065"/>
        <dbReference type="ChEBI" id="CHEBI:15377"/>
        <dbReference type="ChEBI" id="CHEBI:15378"/>
        <dbReference type="ChEBI" id="CHEBI:30616"/>
        <dbReference type="ChEBI" id="CHEBI:43474"/>
        <dbReference type="ChEBI" id="CHEBI:456216"/>
        <dbReference type="EC" id="3.6.4.13"/>
    </reaction>
</comment>
<comment type="subunit">
    <text evidence="1">Component of the RNA degradosome, which is a multiprotein complex involved in RNA processing and mRNA degradation.</text>
</comment>
<comment type="subcellular location">
    <subcellularLocation>
        <location evidence="1">Cytoplasm</location>
    </subcellularLocation>
</comment>
<comment type="similarity">
    <text evidence="1">Belongs to the DEAD box helicase family. RhlB subfamily.</text>
</comment>
<proteinExistence type="inferred from homology"/>
<name>RHLB_ECOUT</name>